<organism>
    <name type="scientific">Wolbachia pipientis wMel</name>
    <dbReference type="NCBI Taxonomy" id="163164"/>
    <lineage>
        <taxon>Bacteria</taxon>
        <taxon>Pseudomonadati</taxon>
        <taxon>Pseudomonadota</taxon>
        <taxon>Alphaproteobacteria</taxon>
        <taxon>Rickettsiales</taxon>
        <taxon>Anaplasmataceae</taxon>
        <taxon>Wolbachieae</taxon>
        <taxon>Wolbachia</taxon>
    </lineage>
</organism>
<sequence length="180" mass="20313">MMSNTILPRNFYERPTLVVAGELLGKMLKFSNFSGIITEVEAYIGMSDPACHAAKGYTNRTSVMFGMPGFSYVYFIYGMYYCLNIVTEAEGFPAAVLIRGLKLIEPLEANLGGPGILCKRLNITKEHNKQDLTISHEFCVYESHLKPDYVCTPRIGISKGQEKFWRFKNLRSCVDYLPIG</sequence>
<comment type="similarity">
    <text evidence="1">Belongs to the DNA glycosylase MPG family.</text>
</comment>
<comment type="sequence caution" evidence="2">
    <conflict type="erroneous initiation">
        <sequence resource="EMBL-CDS" id="AAS14764"/>
    </conflict>
</comment>
<gene>
    <name type="ordered locus">WD_1110</name>
</gene>
<evidence type="ECO:0000255" key="1">
    <source>
        <dbReference type="HAMAP-Rule" id="MF_00527"/>
    </source>
</evidence>
<evidence type="ECO:0000305" key="2"/>
<reference key="1">
    <citation type="journal article" date="2004" name="PLoS Biol.">
        <title>Phylogenomics of the reproductive parasite Wolbachia pipientis wMel: a streamlined genome overrun by mobile genetic elements.</title>
        <authorList>
            <person name="Wu M."/>
            <person name="Sun L.V."/>
            <person name="Vamathevan J.J."/>
            <person name="Riegler M."/>
            <person name="DeBoy R.T."/>
            <person name="Brownlie J.C."/>
            <person name="McGraw E.A."/>
            <person name="Martin W."/>
            <person name="Esser C."/>
            <person name="Ahmadinejad N."/>
            <person name="Wiegand C."/>
            <person name="Madupu R."/>
            <person name="Beanan M.J."/>
            <person name="Brinkac L.M."/>
            <person name="Daugherty S.C."/>
            <person name="Durkin A.S."/>
            <person name="Kolonay J.F."/>
            <person name="Nelson W.C."/>
            <person name="Mohamoud Y."/>
            <person name="Lee P."/>
            <person name="Berry K.J."/>
            <person name="Young M.B."/>
            <person name="Utterback T.R."/>
            <person name="Weidman J.F."/>
            <person name="Nierman W.C."/>
            <person name="Paulsen I.T."/>
            <person name="Nelson K.E."/>
            <person name="Tettelin H."/>
            <person name="O'Neill S.L."/>
            <person name="Eisen J.A."/>
        </authorList>
    </citation>
    <scope>NUCLEOTIDE SEQUENCE [LARGE SCALE GENOMIC DNA]</scope>
</reference>
<keyword id="KW-0227">DNA damage</keyword>
<keyword id="KW-0234">DNA repair</keyword>
<keyword id="KW-0378">Hydrolase</keyword>
<name>3MGH_WOLPM</name>
<dbReference type="EC" id="3.2.2.-" evidence="1"/>
<dbReference type="EMBL" id="AE017196">
    <property type="protein sequence ID" value="AAS14764.1"/>
    <property type="status" value="ALT_INIT"/>
    <property type="molecule type" value="Genomic_DNA"/>
</dbReference>
<dbReference type="SMR" id="Q73G53"/>
<dbReference type="EnsemblBacteria" id="AAS14764">
    <property type="protein sequence ID" value="AAS14764"/>
    <property type="gene ID" value="WD_1110"/>
</dbReference>
<dbReference type="KEGG" id="wol:WD_1110"/>
<dbReference type="eggNOG" id="COG2094">
    <property type="taxonomic scope" value="Bacteria"/>
</dbReference>
<dbReference type="Proteomes" id="UP000008215">
    <property type="component" value="Chromosome"/>
</dbReference>
<dbReference type="GO" id="GO:0003905">
    <property type="term" value="F:alkylbase DNA N-glycosylase activity"/>
    <property type="evidence" value="ECO:0007669"/>
    <property type="project" value="InterPro"/>
</dbReference>
<dbReference type="GO" id="GO:0003677">
    <property type="term" value="F:DNA binding"/>
    <property type="evidence" value="ECO:0007669"/>
    <property type="project" value="InterPro"/>
</dbReference>
<dbReference type="GO" id="GO:0006284">
    <property type="term" value="P:base-excision repair"/>
    <property type="evidence" value="ECO:0007669"/>
    <property type="project" value="InterPro"/>
</dbReference>
<dbReference type="CDD" id="cd00540">
    <property type="entry name" value="AAG"/>
    <property type="match status" value="1"/>
</dbReference>
<dbReference type="Gene3D" id="3.10.300.10">
    <property type="entry name" value="Methylpurine-DNA glycosylase (MPG)"/>
    <property type="match status" value="1"/>
</dbReference>
<dbReference type="HAMAP" id="MF_00527">
    <property type="entry name" value="3MGH"/>
    <property type="match status" value="1"/>
</dbReference>
<dbReference type="InterPro" id="IPR011034">
    <property type="entry name" value="Formyl_transferase-like_C_sf"/>
</dbReference>
<dbReference type="InterPro" id="IPR003180">
    <property type="entry name" value="MPG"/>
</dbReference>
<dbReference type="InterPro" id="IPR036995">
    <property type="entry name" value="MPG_sf"/>
</dbReference>
<dbReference type="NCBIfam" id="TIGR00567">
    <property type="entry name" value="3mg"/>
    <property type="match status" value="1"/>
</dbReference>
<dbReference type="NCBIfam" id="NF002004">
    <property type="entry name" value="PRK00802.1-4"/>
    <property type="match status" value="1"/>
</dbReference>
<dbReference type="PANTHER" id="PTHR10429">
    <property type="entry name" value="DNA-3-METHYLADENINE GLYCOSYLASE"/>
    <property type="match status" value="1"/>
</dbReference>
<dbReference type="PANTHER" id="PTHR10429:SF0">
    <property type="entry name" value="DNA-3-METHYLADENINE GLYCOSYLASE"/>
    <property type="match status" value="1"/>
</dbReference>
<dbReference type="Pfam" id="PF02245">
    <property type="entry name" value="Pur_DNA_glyco"/>
    <property type="match status" value="1"/>
</dbReference>
<dbReference type="SUPFAM" id="SSF50486">
    <property type="entry name" value="FMT C-terminal domain-like"/>
    <property type="match status" value="1"/>
</dbReference>
<feature type="chain" id="PRO_0000265069" description="Putative 3-methyladenine DNA glycosylase">
    <location>
        <begin position="1"/>
        <end position="180"/>
    </location>
</feature>
<proteinExistence type="inferred from homology"/>
<protein>
    <recommendedName>
        <fullName evidence="1">Putative 3-methyladenine DNA glycosylase</fullName>
        <ecNumber evidence="1">3.2.2.-</ecNumber>
    </recommendedName>
</protein>
<accession>Q73G53</accession>